<comment type="function">
    <text evidence="1">Positively regulates the activity of the minus-end directed microtubule motor protein dynein. May enhance dynein-mediated microtubule sliding by targeting dynein to the microtubule plus end. Required for nuclear migration during vegetative growth as well as development. Required for retrograde early endosome (EE) transport from the hyphal tip. Required for localization of dynein to the mitotic spindle poles. Recruits additional proteins to the dynein complex at SPBs.</text>
</comment>
<comment type="subunit">
    <text evidence="1">Self-associates. Interacts with nudE and dynein.</text>
</comment>
<comment type="subcellular location">
    <subcellularLocation>
        <location>Cytoplasm</location>
        <location>Cytoskeleton</location>
    </subcellularLocation>
    <subcellularLocation>
        <location evidence="1">Cytoplasm</location>
        <location evidence="1">Cytoskeleton</location>
        <location evidence="1">Spindle pole</location>
    </subcellularLocation>
    <text evidence="1">Localizes to the plus ends of microtubules at the hyphal tip and the mitotic spindle poles.</text>
</comment>
<comment type="domain">
    <text evidence="1">Dimerization mediated by the LisH domain may be required to activate dynein.</text>
</comment>
<comment type="similarity">
    <text evidence="1">Belongs to the WD repeat LIS1/nudF family.</text>
</comment>
<comment type="sequence caution" evidence="3">
    <conflict type="erroneous gene model prediction">
        <sequence resource="EMBL-CDS" id="BAE59224"/>
    </conflict>
</comment>
<sequence length="455" mass="50557">MPPLLTNRQAEELHKSMIAYLVASDLPDTAAALRREVNLSEDVFDPTTAKRYEGMLEKKWTSIARLQKKIMDLESRNATLQSELDNSTPASRLKRNQDPASWLPSTVRYSLESHRDKVNCVAFHPTFSSIASGSDDCTIKIWDWELGELERTLKGHTRAVRDVDYGGPRDNVLLASCSSDLSIKLWKPTDNYKNIRTLQGHDHIVSAVRFIPSRNLLVSASRDNDMRIWDVTTGYCVKTINGHTDWVRDVSISFDGRFLFSTGQDMTARLWDISTVSNIEHKRTMLGHENFIECCAFAPPTSYQFLAPLAGLGKRPSSTNGADFMATGSRDNTIKIWDSRGTCLMTLVGHDSWVQALVFHPGGKYLLSVSDDKTLRCWDLNQQGKCVKTLDAHESFVTSLRWAPGVAKNVPGGDGAAEGEGNDKNGAGSENPANIQMRCVVATGGWDQKLKIFAG</sequence>
<gene>
    <name evidence="1" type="primary">nudF</name>
    <name evidence="1" type="synonym">lis1</name>
    <name type="synonym">pac1</name>
    <name type="ORF">AO090023000713</name>
</gene>
<protein>
    <recommendedName>
        <fullName evidence="1">Nuclear distribution protein nudF</fullName>
    </recommendedName>
    <alternativeName>
        <fullName evidence="1">Lissencephaly-1 homolog</fullName>
        <shortName evidence="1">LIS-1</shortName>
    </alternativeName>
</protein>
<proteinExistence type="inferred from homology"/>
<evidence type="ECO:0000255" key="1">
    <source>
        <dbReference type="HAMAP-Rule" id="MF_03141"/>
    </source>
</evidence>
<evidence type="ECO:0000256" key="2">
    <source>
        <dbReference type="SAM" id="MobiDB-lite"/>
    </source>
</evidence>
<evidence type="ECO:0000305" key="3"/>
<reference key="1">
    <citation type="journal article" date="2005" name="Nature">
        <title>Genome sequencing and analysis of Aspergillus oryzae.</title>
        <authorList>
            <person name="Machida M."/>
            <person name="Asai K."/>
            <person name="Sano M."/>
            <person name="Tanaka T."/>
            <person name="Kumagai T."/>
            <person name="Terai G."/>
            <person name="Kusumoto K."/>
            <person name="Arima T."/>
            <person name="Akita O."/>
            <person name="Kashiwagi Y."/>
            <person name="Abe K."/>
            <person name="Gomi K."/>
            <person name="Horiuchi H."/>
            <person name="Kitamoto K."/>
            <person name="Kobayashi T."/>
            <person name="Takeuchi M."/>
            <person name="Denning D.W."/>
            <person name="Galagan J.E."/>
            <person name="Nierman W.C."/>
            <person name="Yu J."/>
            <person name="Archer D.B."/>
            <person name="Bennett J.W."/>
            <person name="Bhatnagar D."/>
            <person name="Cleveland T.E."/>
            <person name="Fedorova N.D."/>
            <person name="Gotoh O."/>
            <person name="Horikawa H."/>
            <person name="Hosoyama A."/>
            <person name="Ichinomiya M."/>
            <person name="Igarashi R."/>
            <person name="Iwashita K."/>
            <person name="Juvvadi P.R."/>
            <person name="Kato M."/>
            <person name="Kato Y."/>
            <person name="Kin T."/>
            <person name="Kokubun A."/>
            <person name="Maeda H."/>
            <person name="Maeyama N."/>
            <person name="Maruyama J."/>
            <person name="Nagasaki H."/>
            <person name="Nakajima T."/>
            <person name="Oda K."/>
            <person name="Okada K."/>
            <person name="Paulsen I."/>
            <person name="Sakamoto K."/>
            <person name="Sawano T."/>
            <person name="Takahashi M."/>
            <person name="Takase K."/>
            <person name="Terabayashi Y."/>
            <person name="Wortman J.R."/>
            <person name="Yamada O."/>
            <person name="Yamagata Y."/>
            <person name="Anazawa H."/>
            <person name="Hata Y."/>
            <person name="Koide Y."/>
            <person name="Komori T."/>
            <person name="Koyama Y."/>
            <person name="Minetoki T."/>
            <person name="Suharnan S."/>
            <person name="Tanaka A."/>
            <person name="Isono K."/>
            <person name="Kuhara S."/>
            <person name="Ogasawara N."/>
            <person name="Kikuchi H."/>
        </authorList>
    </citation>
    <scope>NUCLEOTIDE SEQUENCE [LARGE SCALE GENOMIC DNA]</scope>
    <source>
        <strain>ATCC 42149 / RIB 40</strain>
    </source>
</reference>
<keyword id="KW-0131">Cell cycle</keyword>
<keyword id="KW-0132">Cell division</keyword>
<keyword id="KW-0175">Coiled coil</keyword>
<keyword id="KW-0963">Cytoplasm</keyword>
<keyword id="KW-0206">Cytoskeleton</keyword>
<keyword id="KW-0493">Microtubule</keyword>
<keyword id="KW-0498">Mitosis</keyword>
<keyword id="KW-1185">Reference proteome</keyword>
<keyword id="KW-0677">Repeat</keyword>
<keyword id="KW-0813">Transport</keyword>
<keyword id="KW-0853">WD repeat</keyword>
<name>LIS1_ASPOR</name>
<accession>Q2UGU1</accession>
<organism>
    <name type="scientific">Aspergillus oryzae (strain ATCC 42149 / RIB 40)</name>
    <name type="common">Yellow koji mold</name>
    <dbReference type="NCBI Taxonomy" id="510516"/>
    <lineage>
        <taxon>Eukaryota</taxon>
        <taxon>Fungi</taxon>
        <taxon>Dikarya</taxon>
        <taxon>Ascomycota</taxon>
        <taxon>Pezizomycotina</taxon>
        <taxon>Eurotiomycetes</taxon>
        <taxon>Eurotiomycetidae</taxon>
        <taxon>Eurotiales</taxon>
        <taxon>Aspergillaceae</taxon>
        <taxon>Aspergillus</taxon>
        <taxon>Aspergillus subgen. Circumdati</taxon>
    </lineage>
</organism>
<feature type="chain" id="PRO_0000240422" description="Nuclear distribution protein nudF">
    <location>
        <begin position="1"/>
        <end position="455"/>
    </location>
</feature>
<feature type="domain" description="LisH" evidence="1">
    <location>
        <begin position="9"/>
        <end position="41"/>
    </location>
</feature>
<feature type="repeat" description="WD 1">
    <location>
        <begin position="113"/>
        <end position="154"/>
    </location>
</feature>
<feature type="repeat" description="WD 2">
    <location>
        <begin position="156"/>
        <end position="196"/>
    </location>
</feature>
<feature type="repeat" description="WD 3">
    <location>
        <begin position="200"/>
        <end position="239"/>
    </location>
</feature>
<feature type="repeat" description="WD 4">
    <location>
        <begin position="242"/>
        <end position="281"/>
    </location>
</feature>
<feature type="repeat" description="WD 5">
    <location>
        <begin position="287"/>
        <end position="347"/>
    </location>
</feature>
<feature type="repeat" description="WD 6">
    <location>
        <begin position="349"/>
        <end position="388"/>
    </location>
</feature>
<feature type="repeat" description="WD 7">
    <location>
        <begin position="392"/>
        <end position="438"/>
    </location>
</feature>
<feature type="repeat" description="WD 8">
    <location>
        <begin position="440"/>
        <end position="455"/>
    </location>
</feature>
<feature type="region of interest" description="Disordered" evidence="2">
    <location>
        <begin position="408"/>
        <end position="431"/>
    </location>
</feature>
<feature type="coiled-coil region" evidence="1">
    <location>
        <begin position="61"/>
        <end position="88"/>
    </location>
</feature>
<dbReference type="EMBL" id="BA000051">
    <property type="protein sequence ID" value="BAE59224.1"/>
    <property type="status" value="ALT_SEQ"/>
    <property type="molecule type" value="Genomic_DNA"/>
</dbReference>
<dbReference type="RefSeq" id="XP_001821226.2">
    <property type="nucleotide sequence ID" value="XM_001821174.2"/>
</dbReference>
<dbReference type="SMR" id="Q2UGU1"/>
<dbReference type="STRING" id="510516.Q2UGU1"/>
<dbReference type="VEuPathDB" id="FungiDB:AO090023000713"/>
<dbReference type="Proteomes" id="UP000006564">
    <property type="component" value="Chromosome 3"/>
</dbReference>
<dbReference type="GO" id="GO:0005737">
    <property type="term" value="C:cytoplasm"/>
    <property type="evidence" value="ECO:0007669"/>
    <property type="project" value="UniProtKB-UniRule"/>
</dbReference>
<dbReference type="GO" id="GO:0005874">
    <property type="term" value="C:microtubule"/>
    <property type="evidence" value="ECO:0007669"/>
    <property type="project" value="UniProtKB-KW"/>
</dbReference>
<dbReference type="GO" id="GO:0005875">
    <property type="term" value="C:microtubule associated complex"/>
    <property type="evidence" value="ECO:0007669"/>
    <property type="project" value="UniProtKB-UniRule"/>
</dbReference>
<dbReference type="GO" id="GO:0000922">
    <property type="term" value="C:spindle pole"/>
    <property type="evidence" value="ECO:0007669"/>
    <property type="project" value="UniProtKB-SubCell"/>
</dbReference>
<dbReference type="GO" id="GO:0070840">
    <property type="term" value="F:dynein complex binding"/>
    <property type="evidence" value="ECO:0007669"/>
    <property type="project" value="UniProtKB-UniRule"/>
</dbReference>
<dbReference type="GO" id="GO:0051301">
    <property type="term" value="P:cell division"/>
    <property type="evidence" value="ECO:0007669"/>
    <property type="project" value="UniProtKB-KW"/>
</dbReference>
<dbReference type="GO" id="GO:0000132">
    <property type="term" value="P:establishment of mitotic spindle orientation"/>
    <property type="evidence" value="ECO:0007669"/>
    <property type="project" value="UniProtKB-UniRule"/>
</dbReference>
<dbReference type="GO" id="GO:0051012">
    <property type="term" value="P:microtubule sliding"/>
    <property type="evidence" value="ECO:0007669"/>
    <property type="project" value="UniProtKB-UniRule"/>
</dbReference>
<dbReference type="CDD" id="cd00200">
    <property type="entry name" value="WD40"/>
    <property type="match status" value="1"/>
</dbReference>
<dbReference type="FunFam" id="2.130.10.10:FF:000342">
    <property type="entry name" value="Nuclear distribution protein PAC1"/>
    <property type="match status" value="1"/>
</dbReference>
<dbReference type="FunFam" id="1.20.960.30:FF:000002">
    <property type="entry name" value="Platelet-activating factor acetylhydrolase ib"/>
    <property type="match status" value="1"/>
</dbReference>
<dbReference type="Gene3D" id="1.20.960.30">
    <property type="match status" value="1"/>
</dbReference>
<dbReference type="Gene3D" id="2.130.10.10">
    <property type="entry name" value="YVTN repeat-like/Quinoprotein amine dehydrogenase"/>
    <property type="match status" value="1"/>
</dbReference>
<dbReference type="HAMAP" id="MF_03141">
    <property type="entry name" value="lis1"/>
    <property type="match status" value="1"/>
</dbReference>
<dbReference type="InterPro" id="IPR017252">
    <property type="entry name" value="Dynein_regulator_LIS1"/>
</dbReference>
<dbReference type="InterPro" id="IPR020472">
    <property type="entry name" value="G-protein_beta_WD-40_rep"/>
</dbReference>
<dbReference type="InterPro" id="IPR037190">
    <property type="entry name" value="LIS1_N"/>
</dbReference>
<dbReference type="InterPro" id="IPR006594">
    <property type="entry name" value="LisH"/>
</dbReference>
<dbReference type="InterPro" id="IPR056795">
    <property type="entry name" value="PAC1-like_LisH-like_dom"/>
</dbReference>
<dbReference type="InterPro" id="IPR015943">
    <property type="entry name" value="WD40/YVTN_repeat-like_dom_sf"/>
</dbReference>
<dbReference type="InterPro" id="IPR019775">
    <property type="entry name" value="WD40_repeat_CS"/>
</dbReference>
<dbReference type="InterPro" id="IPR036322">
    <property type="entry name" value="WD40_repeat_dom_sf"/>
</dbReference>
<dbReference type="InterPro" id="IPR001680">
    <property type="entry name" value="WD40_rpt"/>
</dbReference>
<dbReference type="PANTHER" id="PTHR19879">
    <property type="entry name" value="TRANSCRIPTION INITIATION FACTOR TFIID"/>
    <property type="match status" value="1"/>
</dbReference>
<dbReference type="PANTHER" id="PTHR19879:SF9">
    <property type="entry name" value="TRANSCRIPTION INITIATION FACTOR TFIID SUBUNIT 5"/>
    <property type="match status" value="1"/>
</dbReference>
<dbReference type="Pfam" id="PF24951">
    <property type="entry name" value="LisH_PAC1"/>
    <property type="match status" value="1"/>
</dbReference>
<dbReference type="Pfam" id="PF00400">
    <property type="entry name" value="WD40"/>
    <property type="match status" value="7"/>
</dbReference>
<dbReference type="PIRSF" id="PIRSF037647">
    <property type="entry name" value="Dynein_regulator_Lis1"/>
    <property type="match status" value="1"/>
</dbReference>
<dbReference type="PRINTS" id="PR00320">
    <property type="entry name" value="GPROTEINBRPT"/>
</dbReference>
<dbReference type="SMART" id="SM00320">
    <property type="entry name" value="WD40"/>
    <property type="match status" value="7"/>
</dbReference>
<dbReference type="SUPFAM" id="SSF109925">
    <property type="entry name" value="Lissencephaly-1 protein (Lis-1, PAF-AH alpha) N-terminal domain"/>
    <property type="match status" value="1"/>
</dbReference>
<dbReference type="SUPFAM" id="SSF50978">
    <property type="entry name" value="WD40 repeat-like"/>
    <property type="match status" value="1"/>
</dbReference>
<dbReference type="PROSITE" id="PS50896">
    <property type="entry name" value="LISH"/>
    <property type="match status" value="1"/>
</dbReference>
<dbReference type="PROSITE" id="PS00678">
    <property type="entry name" value="WD_REPEATS_1"/>
    <property type="match status" value="3"/>
</dbReference>
<dbReference type="PROSITE" id="PS50082">
    <property type="entry name" value="WD_REPEATS_2"/>
    <property type="match status" value="6"/>
</dbReference>
<dbReference type="PROSITE" id="PS50294">
    <property type="entry name" value="WD_REPEATS_REGION"/>
    <property type="match status" value="1"/>
</dbReference>